<feature type="chain" id="PRO_0000052860" description="Hemoglobin subunit beta">
    <location>
        <begin position="1"/>
        <end position="145"/>
    </location>
</feature>
<feature type="domain" description="Globin" evidence="2">
    <location>
        <begin position="1"/>
        <end position="145"/>
    </location>
</feature>
<feature type="binding site" description="distal binding residue">
    <location>
        <position position="62"/>
    </location>
    <ligand>
        <name>heme b</name>
        <dbReference type="ChEBI" id="CHEBI:60344"/>
    </ligand>
    <ligandPart>
        <name>Fe</name>
        <dbReference type="ChEBI" id="CHEBI:18248"/>
    </ligandPart>
</feature>
<feature type="binding site" description="proximal binding residue">
    <location>
        <position position="91"/>
    </location>
    <ligand>
        <name>heme b</name>
        <dbReference type="ChEBI" id="CHEBI:60344"/>
    </ligand>
    <ligandPart>
        <name>Fe</name>
        <dbReference type="ChEBI" id="CHEBI:18248"/>
    </ligandPart>
</feature>
<feature type="modified residue" description="Phosphothreonine" evidence="1">
    <location>
        <position position="11"/>
    </location>
</feature>
<feature type="modified residue" description="N6-acetyllysine" evidence="1">
    <location>
        <position position="58"/>
    </location>
</feature>
<feature type="modified residue" description="N6-acetyllysine" evidence="1">
    <location>
        <position position="81"/>
    </location>
</feature>
<feature type="modified residue" description="S-nitrosocysteine" evidence="1">
    <location>
        <position position="92"/>
    </location>
</feature>
<gene>
    <name type="primary">HBB</name>
</gene>
<name>HBB_ALCAA</name>
<protein>
    <recommendedName>
        <fullName>Hemoglobin subunit beta</fullName>
    </recommendedName>
    <alternativeName>
        <fullName>Beta-globin</fullName>
    </alternativeName>
    <alternativeName>
        <fullName>Hemoglobin beta chain</fullName>
    </alternativeName>
</protein>
<keyword id="KW-0007">Acetylation</keyword>
<keyword id="KW-0903">Direct protein sequencing</keyword>
<keyword id="KW-0349">Heme</keyword>
<keyword id="KW-0408">Iron</keyword>
<keyword id="KW-0479">Metal-binding</keyword>
<keyword id="KW-0561">Oxygen transport</keyword>
<keyword id="KW-0597">Phosphoprotein</keyword>
<keyword id="KW-0702">S-nitrosylation</keyword>
<keyword id="KW-0813">Transport</keyword>
<accession>P02073</accession>
<proteinExistence type="evidence at protein level"/>
<sequence>MLTAEEKAAVTAFWGKVKVDEVGGEALGRLLVVYPWTQRFFEHFGDLSTADAVMHNAKVKEHGKRVLDAFSEGLKHLDDLKGAFAKLSELHCDKLHVDPENFRLLGNVLVVVLARHFGKEFTPELQADYQKVVTGVANALAHRYH</sequence>
<reference key="1">
    <citation type="journal article" date="1984" name="Hoppe-Seyler's Z. Physiol. Chem.">
        <title>Intrinsic oxygen affinity: the primary structure of a ruminantia hemoglobin: methionine in betaNA2 of a pecora, the Northern elk (Alces alces alces).</title>
        <authorList>
            <person name="Aschauer H."/>
            <person name="Wiesner H."/>
            <person name="Braunitzer G."/>
        </authorList>
    </citation>
    <scope>PROTEIN SEQUENCE</scope>
</reference>
<organism>
    <name type="scientific">Alces alces alces</name>
    <name type="common">European moose</name>
    <name type="synonym">Elk</name>
    <dbReference type="NCBI Taxonomy" id="9853"/>
    <lineage>
        <taxon>Eukaryota</taxon>
        <taxon>Metazoa</taxon>
        <taxon>Chordata</taxon>
        <taxon>Craniata</taxon>
        <taxon>Vertebrata</taxon>
        <taxon>Euteleostomi</taxon>
        <taxon>Mammalia</taxon>
        <taxon>Eutheria</taxon>
        <taxon>Laurasiatheria</taxon>
        <taxon>Artiodactyla</taxon>
        <taxon>Ruminantia</taxon>
        <taxon>Pecora</taxon>
        <taxon>Cervidae</taxon>
        <taxon>Odocoileinae</taxon>
        <taxon>Alces</taxon>
    </lineage>
</organism>
<comment type="function">
    <text>Involved in oxygen transport from the lung to the various peripheral tissues.</text>
</comment>
<comment type="subunit">
    <text>Heterotetramer of two alpha chains and two beta chains.</text>
</comment>
<comment type="tissue specificity">
    <text>Red blood cells.</text>
</comment>
<comment type="similarity">
    <text evidence="2">Belongs to the globin family.</text>
</comment>
<dbReference type="PIR" id="A02392">
    <property type="entry name" value="HBEKN"/>
</dbReference>
<dbReference type="SMR" id="P02073"/>
<dbReference type="GO" id="GO:0072562">
    <property type="term" value="C:blood microparticle"/>
    <property type="evidence" value="ECO:0007669"/>
    <property type="project" value="TreeGrafter"/>
</dbReference>
<dbReference type="GO" id="GO:0031838">
    <property type="term" value="C:haptoglobin-hemoglobin complex"/>
    <property type="evidence" value="ECO:0007669"/>
    <property type="project" value="TreeGrafter"/>
</dbReference>
<dbReference type="GO" id="GO:0005833">
    <property type="term" value="C:hemoglobin complex"/>
    <property type="evidence" value="ECO:0007669"/>
    <property type="project" value="InterPro"/>
</dbReference>
<dbReference type="GO" id="GO:0031720">
    <property type="term" value="F:haptoglobin binding"/>
    <property type="evidence" value="ECO:0007669"/>
    <property type="project" value="TreeGrafter"/>
</dbReference>
<dbReference type="GO" id="GO:0020037">
    <property type="term" value="F:heme binding"/>
    <property type="evidence" value="ECO:0007669"/>
    <property type="project" value="InterPro"/>
</dbReference>
<dbReference type="GO" id="GO:0031721">
    <property type="term" value="F:hemoglobin alpha binding"/>
    <property type="evidence" value="ECO:0007669"/>
    <property type="project" value="TreeGrafter"/>
</dbReference>
<dbReference type="GO" id="GO:0046872">
    <property type="term" value="F:metal ion binding"/>
    <property type="evidence" value="ECO:0007669"/>
    <property type="project" value="UniProtKB-KW"/>
</dbReference>
<dbReference type="GO" id="GO:0043177">
    <property type="term" value="F:organic acid binding"/>
    <property type="evidence" value="ECO:0007669"/>
    <property type="project" value="TreeGrafter"/>
</dbReference>
<dbReference type="GO" id="GO:0019825">
    <property type="term" value="F:oxygen binding"/>
    <property type="evidence" value="ECO:0007669"/>
    <property type="project" value="InterPro"/>
</dbReference>
<dbReference type="GO" id="GO:0005344">
    <property type="term" value="F:oxygen carrier activity"/>
    <property type="evidence" value="ECO:0007669"/>
    <property type="project" value="UniProtKB-KW"/>
</dbReference>
<dbReference type="GO" id="GO:0004601">
    <property type="term" value="F:peroxidase activity"/>
    <property type="evidence" value="ECO:0007669"/>
    <property type="project" value="TreeGrafter"/>
</dbReference>
<dbReference type="GO" id="GO:0042744">
    <property type="term" value="P:hydrogen peroxide catabolic process"/>
    <property type="evidence" value="ECO:0007669"/>
    <property type="project" value="TreeGrafter"/>
</dbReference>
<dbReference type="CDD" id="cd08925">
    <property type="entry name" value="Hb-beta-like"/>
    <property type="match status" value="1"/>
</dbReference>
<dbReference type="FunFam" id="1.10.490.10:FF:000001">
    <property type="entry name" value="Hemoglobin subunit beta"/>
    <property type="match status" value="1"/>
</dbReference>
<dbReference type="Gene3D" id="1.10.490.10">
    <property type="entry name" value="Globins"/>
    <property type="match status" value="1"/>
</dbReference>
<dbReference type="InterPro" id="IPR000971">
    <property type="entry name" value="Globin"/>
</dbReference>
<dbReference type="InterPro" id="IPR009050">
    <property type="entry name" value="Globin-like_sf"/>
</dbReference>
<dbReference type="InterPro" id="IPR012292">
    <property type="entry name" value="Globin/Proto"/>
</dbReference>
<dbReference type="InterPro" id="IPR002337">
    <property type="entry name" value="Hemoglobin_b"/>
</dbReference>
<dbReference type="InterPro" id="IPR050056">
    <property type="entry name" value="Hemoglobin_oxygen_transport"/>
</dbReference>
<dbReference type="PANTHER" id="PTHR11442">
    <property type="entry name" value="HEMOGLOBIN FAMILY MEMBER"/>
    <property type="match status" value="1"/>
</dbReference>
<dbReference type="PANTHER" id="PTHR11442:SF42">
    <property type="entry name" value="HEMOGLOBIN SUBUNIT BETA"/>
    <property type="match status" value="1"/>
</dbReference>
<dbReference type="Pfam" id="PF00042">
    <property type="entry name" value="Globin"/>
    <property type="match status" value="1"/>
</dbReference>
<dbReference type="PRINTS" id="PR00814">
    <property type="entry name" value="BETAHAEM"/>
</dbReference>
<dbReference type="SUPFAM" id="SSF46458">
    <property type="entry name" value="Globin-like"/>
    <property type="match status" value="1"/>
</dbReference>
<dbReference type="PROSITE" id="PS01033">
    <property type="entry name" value="GLOBIN"/>
    <property type="match status" value="1"/>
</dbReference>
<evidence type="ECO:0000250" key="1">
    <source>
        <dbReference type="UniProtKB" id="P68871"/>
    </source>
</evidence>
<evidence type="ECO:0000255" key="2">
    <source>
        <dbReference type="PROSITE-ProRule" id="PRU00238"/>
    </source>
</evidence>